<proteinExistence type="inferred from homology"/>
<evidence type="ECO:0000255" key="1">
    <source>
        <dbReference type="HAMAP-Rule" id="MF_00362"/>
    </source>
</evidence>
<evidence type="ECO:0000305" key="2"/>
<keyword id="KW-1185">Reference proteome</keyword>
<keyword id="KW-0687">Ribonucleoprotein</keyword>
<keyword id="KW-0689">Ribosomal protein</keyword>
<keyword id="KW-0694">RNA-binding</keyword>
<keyword id="KW-0699">rRNA-binding</keyword>
<feature type="chain" id="PRO_0000154598" description="Large ribosomal subunit protein uL10">
    <location>
        <begin position="1"/>
        <end position="181"/>
    </location>
</feature>
<accession>Q89J72</accession>
<organism>
    <name type="scientific">Bradyrhizobium diazoefficiens (strain JCM 10833 / BCRC 13528 / IAM 13628 / NBRC 14792 / USDA 110)</name>
    <dbReference type="NCBI Taxonomy" id="224911"/>
    <lineage>
        <taxon>Bacteria</taxon>
        <taxon>Pseudomonadati</taxon>
        <taxon>Pseudomonadota</taxon>
        <taxon>Alphaproteobacteria</taxon>
        <taxon>Hyphomicrobiales</taxon>
        <taxon>Nitrobacteraceae</taxon>
        <taxon>Bradyrhizobium</taxon>
    </lineage>
</organism>
<reference key="1">
    <citation type="journal article" date="2002" name="DNA Res.">
        <title>Complete genomic sequence of nitrogen-fixing symbiotic bacterium Bradyrhizobium japonicum USDA110.</title>
        <authorList>
            <person name="Kaneko T."/>
            <person name="Nakamura Y."/>
            <person name="Sato S."/>
            <person name="Minamisawa K."/>
            <person name="Uchiumi T."/>
            <person name="Sasamoto S."/>
            <person name="Watanabe A."/>
            <person name="Idesawa K."/>
            <person name="Iriguchi M."/>
            <person name="Kawashima K."/>
            <person name="Kohara M."/>
            <person name="Matsumoto M."/>
            <person name="Shimpo S."/>
            <person name="Tsuruoka H."/>
            <person name="Wada T."/>
            <person name="Yamada M."/>
            <person name="Tabata S."/>
        </authorList>
    </citation>
    <scope>NUCLEOTIDE SEQUENCE [LARGE SCALE GENOMIC DNA]</scope>
    <source>
        <strain>JCM 10833 / BCRC 13528 / IAM 13628 / NBRC 14792 / USDA 110</strain>
    </source>
</reference>
<comment type="function">
    <text evidence="1">Forms part of the ribosomal stalk, playing a central role in the interaction of the ribosome with GTP-bound translation factors.</text>
</comment>
<comment type="subunit">
    <text evidence="1">Part of the ribosomal stalk of the 50S ribosomal subunit. The N-terminus interacts with L11 and the large rRNA to form the base of the stalk. The C-terminus forms an elongated spine to which L12 dimers bind in a sequential fashion forming a multimeric L10(L12)X complex.</text>
</comment>
<comment type="similarity">
    <text evidence="1">Belongs to the universal ribosomal protein uL10 family.</text>
</comment>
<dbReference type="EMBL" id="BA000040">
    <property type="protein sequence ID" value="BAC50677.1"/>
    <property type="molecule type" value="Genomic_DNA"/>
</dbReference>
<dbReference type="RefSeq" id="NP_772052.2">
    <property type="nucleotide sequence ID" value="NC_004463.1"/>
</dbReference>
<dbReference type="SMR" id="Q89J72"/>
<dbReference type="FunCoup" id="Q89J72">
    <property type="interactions" value="709"/>
</dbReference>
<dbReference type="STRING" id="224911.AAV28_24470"/>
<dbReference type="EnsemblBacteria" id="BAC50677">
    <property type="protein sequence ID" value="BAC50677"/>
    <property type="gene ID" value="BAC50677"/>
</dbReference>
<dbReference type="KEGG" id="bja:bll5412"/>
<dbReference type="PATRIC" id="fig|224911.5.peg.5500"/>
<dbReference type="eggNOG" id="COG0244">
    <property type="taxonomic scope" value="Bacteria"/>
</dbReference>
<dbReference type="HOGENOM" id="CLU_092227_0_0_5"/>
<dbReference type="InParanoid" id="Q89J72"/>
<dbReference type="OrthoDB" id="9791972at2"/>
<dbReference type="Proteomes" id="UP000002526">
    <property type="component" value="Chromosome"/>
</dbReference>
<dbReference type="GO" id="GO:0022625">
    <property type="term" value="C:cytosolic large ribosomal subunit"/>
    <property type="evidence" value="ECO:0000318"/>
    <property type="project" value="GO_Central"/>
</dbReference>
<dbReference type="GO" id="GO:0070180">
    <property type="term" value="F:large ribosomal subunit rRNA binding"/>
    <property type="evidence" value="ECO:0007669"/>
    <property type="project" value="UniProtKB-UniRule"/>
</dbReference>
<dbReference type="GO" id="GO:0003735">
    <property type="term" value="F:structural constituent of ribosome"/>
    <property type="evidence" value="ECO:0000318"/>
    <property type="project" value="GO_Central"/>
</dbReference>
<dbReference type="GO" id="GO:0006412">
    <property type="term" value="P:translation"/>
    <property type="evidence" value="ECO:0000318"/>
    <property type="project" value="GO_Central"/>
</dbReference>
<dbReference type="CDD" id="cd05797">
    <property type="entry name" value="Ribosomal_L10"/>
    <property type="match status" value="1"/>
</dbReference>
<dbReference type="FunFam" id="3.30.70.1730:FF:000029">
    <property type="entry name" value="50S ribosomal protein L10"/>
    <property type="match status" value="1"/>
</dbReference>
<dbReference type="Gene3D" id="3.30.70.1730">
    <property type="match status" value="1"/>
</dbReference>
<dbReference type="Gene3D" id="6.10.250.290">
    <property type="match status" value="1"/>
</dbReference>
<dbReference type="HAMAP" id="MF_00362">
    <property type="entry name" value="Ribosomal_uL10"/>
    <property type="match status" value="1"/>
</dbReference>
<dbReference type="InterPro" id="IPR001790">
    <property type="entry name" value="Ribosomal_uL10"/>
</dbReference>
<dbReference type="InterPro" id="IPR043141">
    <property type="entry name" value="Ribosomal_uL10-like_sf"/>
</dbReference>
<dbReference type="InterPro" id="IPR022973">
    <property type="entry name" value="Ribosomal_uL10_bac"/>
</dbReference>
<dbReference type="InterPro" id="IPR047865">
    <property type="entry name" value="Ribosomal_uL10_bac_type"/>
</dbReference>
<dbReference type="NCBIfam" id="NF000955">
    <property type="entry name" value="PRK00099.1-1"/>
    <property type="match status" value="1"/>
</dbReference>
<dbReference type="PANTHER" id="PTHR11560">
    <property type="entry name" value="39S RIBOSOMAL PROTEIN L10, MITOCHONDRIAL"/>
    <property type="match status" value="1"/>
</dbReference>
<dbReference type="Pfam" id="PF00466">
    <property type="entry name" value="Ribosomal_L10"/>
    <property type="match status" value="1"/>
</dbReference>
<dbReference type="SUPFAM" id="SSF160369">
    <property type="entry name" value="Ribosomal protein L10-like"/>
    <property type="match status" value="1"/>
</dbReference>
<name>RL10_BRADU</name>
<sequence>MTANRKELAVERAAKKEAVEQLNGVFKTTSVAVVAQYSGLTVAQMQKLRQQMKQAGASVKVSKNRLAKIALEGTDVVAIGPMLKGPTVIATSNDPVAAPKVAIEFAKANEKFVIVGGSMGKTVLNVDGVKALASLPSLDELRGKIVGLIVAPATKLAQLANAPAGKLARVIQAHASKGEAA</sequence>
<gene>
    <name evidence="1" type="primary">rplJ</name>
    <name type="ordered locus">bll5412</name>
</gene>
<protein>
    <recommendedName>
        <fullName evidence="1">Large ribosomal subunit protein uL10</fullName>
    </recommendedName>
    <alternativeName>
        <fullName evidence="2">50S ribosomal protein L10</fullName>
    </alternativeName>
</protein>